<organism>
    <name type="scientific">Zymoseptoria tritici (strain CBS 115943 / IPO323)</name>
    <name type="common">Speckled leaf blotch fungus</name>
    <name type="synonym">Septoria tritici</name>
    <dbReference type="NCBI Taxonomy" id="336722"/>
    <lineage>
        <taxon>Eukaryota</taxon>
        <taxon>Fungi</taxon>
        <taxon>Dikarya</taxon>
        <taxon>Ascomycota</taxon>
        <taxon>Pezizomycotina</taxon>
        <taxon>Dothideomycetes</taxon>
        <taxon>Dothideomycetidae</taxon>
        <taxon>Mycosphaerellales</taxon>
        <taxon>Mycosphaerellaceae</taxon>
        <taxon>Zymoseptoria</taxon>
    </lineage>
</organism>
<proteinExistence type="inferred from homology"/>
<gene>
    <name type="ORF">MYCGRDRAFT_76805</name>
</gene>
<dbReference type="EC" id="4.2.1.17" evidence="4"/>
<dbReference type="EMBL" id="CM001206">
    <property type="protein sequence ID" value="EGP83314.1"/>
    <property type="molecule type" value="Genomic_DNA"/>
</dbReference>
<dbReference type="RefSeq" id="XP_003848338.1">
    <property type="nucleotide sequence ID" value="XM_003848290.1"/>
</dbReference>
<dbReference type="SMR" id="F9XMX6"/>
<dbReference type="STRING" id="336722.F9XMX6"/>
<dbReference type="EnsemblFungi" id="Mycgr3T76805">
    <property type="protein sequence ID" value="Mycgr3P76805"/>
    <property type="gene ID" value="Mycgr3G76805"/>
</dbReference>
<dbReference type="GeneID" id="13396294"/>
<dbReference type="KEGG" id="ztr:MYCGRDRAFT_76805"/>
<dbReference type="VEuPathDB" id="FungiDB:ZTRI_11.199"/>
<dbReference type="eggNOG" id="KOG1679">
    <property type="taxonomic scope" value="Eukaryota"/>
</dbReference>
<dbReference type="HOGENOM" id="CLU_009834_7_6_1"/>
<dbReference type="InParanoid" id="F9XMX6"/>
<dbReference type="OMA" id="YEQAHAW"/>
<dbReference type="OrthoDB" id="410701at2759"/>
<dbReference type="Proteomes" id="UP000008062">
    <property type="component" value="Chromosome 11"/>
</dbReference>
<dbReference type="GO" id="GO:0005739">
    <property type="term" value="C:mitochondrion"/>
    <property type="evidence" value="ECO:0007669"/>
    <property type="project" value="TreeGrafter"/>
</dbReference>
<dbReference type="GO" id="GO:0004300">
    <property type="term" value="F:enoyl-CoA hydratase activity"/>
    <property type="evidence" value="ECO:0007669"/>
    <property type="project" value="UniProtKB-EC"/>
</dbReference>
<dbReference type="GO" id="GO:0016853">
    <property type="term" value="F:isomerase activity"/>
    <property type="evidence" value="ECO:0007669"/>
    <property type="project" value="UniProtKB-KW"/>
</dbReference>
<dbReference type="GO" id="GO:0006635">
    <property type="term" value="P:fatty acid beta-oxidation"/>
    <property type="evidence" value="ECO:0007669"/>
    <property type="project" value="TreeGrafter"/>
</dbReference>
<dbReference type="CDD" id="cd06558">
    <property type="entry name" value="crotonase-like"/>
    <property type="match status" value="1"/>
</dbReference>
<dbReference type="FunFam" id="3.90.226.10:FF:000058">
    <property type="entry name" value="Enoyl-CoA hydratase/isomerase family protein"/>
    <property type="match status" value="1"/>
</dbReference>
<dbReference type="FunFam" id="1.10.12.10:FF:000001">
    <property type="entry name" value="Probable enoyl-CoA hydratase, mitochondrial"/>
    <property type="match status" value="1"/>
</dbReference>
<dbReference type="Gene3D" id="3.90.226.10">
    <property type="entry name" value="2-enoyl-CoA Hydratase, Chain A, domain 1"/>
    <property type="match status" value="1"/>
</dbReference>
<dbReference type="Gene3D" id="1.10.12.10">
    <property type="entry name" value="Lyase 2-enoyl-coa Hydratase, Chain A, domain 2"/>
    <property type="match status" value="1"/>
</dbReference>
<dbReference type="InterPro" id="IPR029045">
    <property type="entry name" value="ClpP/crotonase-like_dom_sf"/>
</dbReference>
<dbReference type="InterPro" id="IPR001753">
    <property type="entry name" value="Enoyl-CoA_hydra/iso"/>
</dbReference>
<dbReference type="InterPro" id="IPR014748">
    <property type="entry name" value="Enoyl-CoA_hydra_C"/>
</dbReference>
<dbReference type="PANTHER" id="PTHR11941">
    <property type="entry name" value="ENOYL-COA HYDRATASE-RELATED"/>
    <property type="match status" value="1"/>
</dbReference>
<dbReference type="PANTHER" id="PTHR11941:SF171">
    <property type="entry name" value="SD19268P"/>
    <property type="match status" value="1"/>
</dbReference>
<dbReference type="Pfam" id="PF00378">
    <property type="entry name" value="ECH_1"/>
    <property type="match status" value="1"/>
</dbReference>
<dbReference type="SUPFAM" id="SSF52096">
    <property type="entry name" value="ClpP/crotonase"/>
    <property type="match status" value="1"/>
</dbReference>
<accession>F9XMX6</accession>
<comment type="function">
    <text evidence="2 3 4 5 9">Enoyl-CoA isomerase/hydratase involved in the biosynthesis of a ferrichrome A-like siderophore which may contribute to organismal virulence (Probable). The first step of siderophore biosynthesis is performed by the HMG-CoA synthase (HMGS) MYCGRDRAFT_54740 which catalyzes the generation of HMG-CoA and CoA using acetoacetyl-CoA and acetyl-CoA as substrates (By similarity). The enoyl-CoA isomerase/hydratase MYCGRDRAFT_76805 then catalyzes the conversion of HMG-CoA to methylglutaconyl-CoA (By similarity). The acyltransferase MYCGRDRAFT_85486 then fuses methylglutaconyl-CoA with hydroxyornithine to yield methylglutaconyl hydroxyornithine (By similarity). Methylglutaconyl hydroxyornithine is then available for use by the nonribosomal peptide synthetase NRPS2 to generate the ferrichrome A-like siderophore (By similarity).</text>
</comment>
<comment type="catalytic activity">
    <reaction evidence="4">
        <text>a (3S)-3-hydroxyacyl-CoA = a (2E)-enoyl-CoA + H2O</text>
        <dbReference type="Rhea" id="RHEA:16105"/>
        <dbReference type="ChEBI" id="CHEBI:15377"/>
        <dbReference type="ChEBI" id="CHEBI:57318"/>
        <dbReference type="ChEBI" id="CHEBI:58856"/>
        <dbReference type="EC" id="4.2.1.17"/>
    </reaction>
    <physiologicalReaction direction="left-to-right" evidence="4">
        <dbReference type="Rhea" id="RHEA:16106"/>
    </physiologicalReaction>
</comment>
<comment type="catalytic activity">
    <reaction evidence="4">
        <text>a 4-saturated-(3S)-3-hydroxyacyl-CoA = a (3E)-enoyl-CoA + H2O</text>
        <dbReference type="Rhea" id="RHEA:20724"/>
        <dbReference type="ChEBI" id="CHEBI:15377"/>
        <dbReference type="ChEBI" id="CHEBI:58521"/>
        <dbReference type="ChEBI" id="CHEBI:137480"/>
        <dbReference type="EC" id="4.2.1.17"/>
    </reaction>
    <physiologicalReaction direction="left-to-right" evidence="4">
        <dbReference type="Rhea" id="RHEA:20725"/>
    </physiologicalReaction>
</comment>
<comment type="pathway">
    <text evidence="9">Siderophore biosynthesis.</text>
</comment>
<comment type="similarity">
    <text evidence="8">Belongs to the enoyl-CoA hydratase/isomerase family.</text>
</comment>
<protein>
    <recommendedName>
        <fullName evidence="7">Enoyl-CoA isomerase/hydratase MYCGRDRAFT_76805</fullName>
        <ecNumber evidence="4">4.2.1.17</ecNumber>
    </recommendedName>
    <alternativeName>
        <fullName evidence="7">Ferrichrome A-like siderophore biosynthesis protein MYCGRDRAFT_76805</fullName>
    </alternativeName>
</protein>
<evidence type="ECO:0000250" key="1">
    <source>
        <dbReference type="UniProtKB" id="P42126"/>
    </source>
</evidence>
<evidence type="ECO:0000250" key="2">
    <source>
        <dbReference type="UniProtKB" id="Q4P3F1"/>
    </source>
</evidence>
<evidence type="ECO:0000250" key="3">
    <source>
        <dbReference type="UniProtKB" id="Q4PEM9"/>
    </source>
</evidence>
<evidence type="ECO:0000250" key="4">
    <source>
        <dbReference type="UniProtKB" id="Q4PEN0"/>
    </source>
</evidence>
<evidence type="ECO:0000250" key="5">
    <source>
        <dbReference type="UniProtKB" id="Q4PEN1"/>
    </source>
</evidence>
<evidence type="ECO:0000255" key="6"/>
<evidence type="ECO:0000303" key="7">
    <source>
    </source>
</evidence>
<evidence type="ECO:0000305" key="8"/>
<evidence type="ECO:0000305" key="9">
    <source>
    </source>
</evidence>
<name>FER4_ZYMTI</name>
<reference key="1">
    <citation type="journal article" date="2011" name="PLoS Genet.">
        <title>Finished genome of the fungal wheat pathogen Mycosphaerella graminicola reveals dispensome structure, chromosome plasticity, and stealth pathogenesis.</title>
        <authorList>
            <person name="Goodwin S.B."/>
            <person name="Ben M'barek S."/>
            <person name="Dhillon B."/>
            <person name="Wittenberg A.H.J."/>
            <person name="Crane C.F."/>
            <person name="Hane J.K."/>
            <person name="Foster A.J."/>
            <person name="Van der Lee T.A.J."/>
            <person name="Grimwood J."/>
            <person name="Aerts A."/>
            <person name="Antoniw J."/>
            <person name="Bailey A."/>
            <person name="Bluhm B."/>
            <person name="Bowler J."/>
            <person name="Bristow J."/>
            <person name="van der Burgt A."/>
            <person name="Canto-Canche B."/>
            <person name="Churchill A.C.L."/>
            <person name="Conde-Ferraez L."/>
            <person name="Cools H.J."/>
            <person name="Coutinho P.M."/>
            <person name="Csukai M."/>
            <person name="Dehal P."/>
            <person name="De Wit P."/>
            <person name="Donzelli B."/>
            <person name="van de Geest H.C."/>
            <person name="van Ham R.C.H.J."/>
            <person name="Hammond-Kosack K.E."/>
            <person name="Henrissat B."/>
            <person name="Kilian A."/>
            <person name="Kobayashi A.K."/>
            <person name="Koopmann E."/>
            <person name="Kourmpetis Y."/>
            <person name="Kuzniar A."/>
            <person name="Lindquist E."/>
            <person name="Lombard V."/>
            <person name="Maliepaard C."/>
            <person name="Martins N."/>
            <person name="Mehrabi R."/>
            <person name="Nap J.P.H."/>
            <person name="Ponomarenko A."/>
            <person name="Rudd J.J."/>
            <person name="Salamov A."/>
            <person name="Schmutz J."/>
            <person name="Schouten H.J."/>
            <person name="Shapiro H."/>
            <person name="Stergiopoulos I."/>
            <person name="Torriani S.F.F."/>
            <person name="Tu H."/>
            <person name="de Vries R.P."/>
            <person name="Waalwijk C."/>
            <person name="Ware S.B."/>
            <person name="Wiebenga A."/>
            <person name="Zwiers L.-H."/>
            <person name="Oliver R.P."/>
            <person name="Grigoriev I.V."/>
            <person name="Kema G.H.J."/>
        </authorList>
    </citation>
    <scope>NUCLEOTIDE SEQUENCE [LARGE SCALE GENOMIC DNA]</scope>
    <source>
        <strain>CBS 115943 / IPO323</strain>
    </source>
</reference>
<reference key="2">
    <citation type="journal article" date="2017" name="BMC Genomics">
        <title>In silico prediction and characterization of secondary metabolite biosynthetic gene clusters in the wheat pathogen Zymoseptoria tritici.</title>
        <authorList>
            <person name="Cairns T."/>
            <person name="Meyer V."/>
        </authorList>
    </citation>
    <scope>FUNCTION</scope>
    <scope>PATHWAY</scope>
</reference>
<keyword id="KW-0413">Isomerase</keyword>
<keyword id="KW-0456">Lyase</keyword>
<keyword id="KW-1185">Reference proteome</keyword>
<keyword id="KW-0843">Virulence</keyword>
<sequence length="306" mass="32851">MFALAQHTARRTLSRQQWTKVVVSAANYSSGSLSSTIRISSIPAPHTGEITVLSLNRPRARNAISTALLGELNTVVEQLHAQGDKSSTRALILTSESDDAFCAGADLKERLTFTEEDTRNFLKTLRHTFTRLSTLPIPTISAISSIAFGGGLELALCTNFRVLASTASIGLPETRLAIIPGGGGTYRLPALIGETRARDLILTGRRVSGEEAYFIGLADRLVQISEQELGEKGVARGRVLEEATAMAKGICEGGPVAIRAAQAAVSGWRDGEGSENKAYERVIPTKDRLEALTAFGEKRKPSFQGR</sequence>
<feature type="chain" id="PRO_0000451098" description="Enoyl-CoA isomerase/hydratase MYCGRDRAFT_76805" evidence="6">
    <location>
        <begin position="1"/>
        <end position="306"/>
    </location>
</feature>
<feature type="binding site" evidence="1">
    <location>
        <begin position="103"/>
        <end position="107"/>
    </location>
    <ligand>
        <name>substrate</name>
    </ligand>
</feature>
<feature type="binding site" evidence="1">
    <location>
        <position position="150"/>
    </location>
    <ligand>
        <name>substrate</name>
    </ligand>
</feature>
<feature type="site" description="Important for catalytic activity" evidence="1">
    <location>
        <position position="173"/>
    </location>
</feature>